<sequence length="254" mass="26564">MSRRILIAGNWKMNMRAESGASLAKGIVDAVGKSPAVEVVLCPPSVYLSGVADAVVGTPVELGAQNLYAAEDGAFTGEVNASMLTDVGCRFVILGHSERRQLMGETDACVAKKLHAALAGNLVPIVCVGETLEQREADDTESVIETQIRGSLEGLDEARAANIVIAYEPVWAIGTGKTASKEQAEAVHAFIRELLGKMFSTEVAEQIRIQYGGSVKPGNAEELLSQPNIDGALVGGSSLKVDDFAGIIKAAPSA</sequence>
<organism>
    <name type="scientific">Rhodopirellula baltica (strain DSM 10527 / NCIMB 13988 / SH1)</name>
    <dbReference type="NCBI Taxonomy" id="243090"/>
    <lineage>
        <taxon>Bacteria</taxon>
        <taxon>Pseudomonadati</taxon>
        <taxon>Planctomycetota</taxon>
        <taxon>Planctomycetia</taxon>
        <taxon>Pirellulales</taxon>
        <taxon>Pirellulaceae</taxon>
        <taxon>Rhodopirellula</taxon>
    </lineage>
</organism>
<evidence type="ECO:0000255" key="1">
    <source>
        <dbReference type="HAMAP-Rule" id="MF_00147"/>
    </source>
</evidence>
<comment type="function">
    <text evidence="1">Involved in the gluconeogenesis. Catalyzes stereospecifically the conversion of dihydroxyacetone phosphate (DHAP) to D-glyceraldehyde-3-phosphate (G3P).</text>
</comment>
<comment type="catalytic activity">
    <reaction evidence="1">
        <text>D-glyceraldehyde 3-phosphate = dihydroxyacetone phosphate</text>
        <dbReference type="Rhea" id="RHEA:18585"/>
        <dbReference type="ChEBI" id="CHEBI:57642"/>
        <dbReference type="ChEBI" id="CHEBI:59776"/>
        <dbReference type="EC" id="5.3.1.1"/>
    </reaction>
</comment>
<comment type="pathway">
    <text evidence="1">Carbohydrate biosynthesis; gluconeogenesis.</text>
</comment>
<comment type="pathway">
    <text evidence="1">Carbohydrate degradation; glycolysis; D-glyceraldehyde 3-phosphate from glycerone phosphate: step 1/1.</text>
</comment>
<comment type="subunit">
    <text evidence="1">Homodimer.</text>
</comment>
<comment type="subcellular location">
    <subcellularLocation>
        <location evidence="1">Cytoplasm</location>
    </subcellularLocation>
</comment>
<comment type="similarity">
    <text evidence="1">Belongs to the triosephosphate isomerase family.</text>
</comment>
<dbReference type="EC" id="5.3.1.1" evidence="1"/>
<dbReference type="EMBL" id="BX294145">
    <property type="protein sequence ID" value="CAD75173.1"/>
    <property type="molecule type" value="Genomic_DNA"/>
</dbReference>
<dbReference type="RefSeq" id="NP_867626.1">
    <property type="nucleotide sequence ID" value="NC_005027.1"/>
</dbReference>
<dbReference type="RefSeq" id="WP_011121241.1">
    <property type="nucleotide sequence ID" value="NC_005027.1"/>
</dbReference>
<dbReference type="SMR" id="Q7UP89"/>
<dbReference type="FunCoup" id="Q7UP89">
    <property type="interactions" value="519"/>
</dbReference>
<dbReference type="STRING" id="243090.RB7095"/>
<dbReference type="EnsemblBacteria" id="CAD75173">
    <property type="protein sequence ID" value="CAD75173"/>
    <property type="gene ID" value="RB7095"/>
</dbReference>
<dbReference type="KEGG" id="rba:RB7095"/>
<dbReference type="PATRIC" id="fig|243090.15.peg.3432"/>
<dbReference type="eggNOG" id="COG0149">
    <property type="taxonomic scope" value="Bacteria"/>
</dbReference>
<dbReference type="HOGENOM" id="CLU_024251_2_3_0"/>
<dbReference type="InParanoid" id="Q7UP89"/>
<dbReference type="OrthoDB" id="9809429at2"/>
<dbReference type="UniPathway" id="UPA00109">
    <property type="reaction ID" value="UER00189"/>
</dbReference>
<dbReference type="UniPathway" id="UPA00138"/>
<dbReference type="Proteomes" id="UP000001025">
    <property type="component" value="Chromosome"/>
</dbReference>
<dbReference type="GO" id="GO:0005829">
    <property type="term" value="C:cytosol"/>
    <property type="evidence" value="ECO:0000318"/>
    <property type="project" value="GO_Central"/>
</dbReference>
<dbReference type="GO" id="GO:0004807">
    <property type="term" value="F:triose-phosphate isomerase activity"/>
    <property type="evidence" value="ECO:0000318"/>
    <property type="project" value="GO_Central"/>
</dbReference>
<dbReference type="GO" id="GO:0006094">
    <property type="term" value="P:gluconeogenesis"/>
    <property type="evidence" value="ECO:0000318"/>
    <property type="project" value="GO_Central"/>
</dbReference>
<dbReference type="GO" id="GO:0046166">
    <property type="term" value="P:glyceraldehyde-3-phosphate biosynthetic process"/>
    <property type="evidence" value="ECO:0000318"/>
    <property type="project" value="GO_Central"/>
</dbReference>
<dbReference type="GO" id="GO:0019563">
    <property type="term" value="P:glycerol catabolic process"/>
    <property type="evidence" value="ECO:0000318"/>
    <property type="project" value="GO_Central"/>
</dbReference>
<dbReference type="GO" id="GO:0006096">
    <property type="term" value="P:glycolytic process"/>
    <property type="evidence" value="ECO:0000318"/>
    <property type="project" value="GO_Central"/>
</dbReference>
<dbReference type="CDD" id="cd00311">
    <property type="entry name" value="TIM"/>
    <property type="match status" value="1"/>
</dbReference>
<dbReference type="FunFam" id="3.20.20.70:FF:000016">
    <property type="entry name" value="Triosephosphate isomerase"/>
    <property type="match status" value="1"/>
</dbReference>
<dbReference type="Gene3D" id="3.20.20.70">
    <property type="entry name" value="Aldolase class I"/>
    <property type="match status" value="1"/>
</dbReference>
<dbReference type="HAMAP" id="MF_00147_B">
    <property type="entry name" value="TIM_B"/>
    <property type="match status" value="1"/>
</dbReference>
<dbReference type="InterPro" id="IPR013785">
    <property type="entry name" value="Aldolase_TIM"/>
</dbReference>
<dbReference type="InterPro" id="IPR035990">
    <property type="entry name" value="TIM_sf"/>
</dbReference>
<dbReference type="InterPro" id="IPR022896">
    <property type="entry name" value="TrioseP_Isoase_bac/euk"/>
</dbReference>
<dbReference type="InterPro" id="IPR000652">
    <property type="entry name" value="Triosephosphate_isomerase"/>
</dbReference>
<dbReference type="InterPro" id="IPR020861">
    <property type="entry name" value="Triosephosphate_isomerase_AS"/>
</dbReference>
<dbReference type="NCBIfam" id="TIGR00419">
    <property type="entry name" value="tim"/>
    <property type="match status" value="1"/>
</dbReference>
<dbReference type="PANTHER" id="PTHR21139">
    <property type="entry name" value="TRIOSEPHOSPHATE ISOMERASE"/>
    <property type="match status" value="1"/>
</dbReference>
<dbReference type="PANTHER" id="PTHR21139:SF42">
    <property type="entry name" value="TRIOSEPHOSPHATE ISOMERASE"/>
    <property type="match status" value="1"/>
</dbReference>
<dbReference type="Pfam" id="PF00121">
    <property type="entry name" value="TIM"/>
    <property type="match status" value="1"/>
</dbReference>
<dbReference type="SUPFAM" id="SSF51351">
    <property type="entry name" value="Triosephosphate isomerase (TIM)"/>
    <property type="match status" value="1"/>
</dbReference>
<dbReference type="PROSITE" id="PS00171">
    <property type="entry name" value="TIM_1"/>
    <property type="match status" value="1"/>
</dbReference>
<dbReference type="PROSITE" id="PS51440">
    <property type="entry name" value="TIM_2"/>
    <property type="match status" value="1"/>
</dbReference>
<keyword id="KW-0963">Cytoplasm</keyword>
<keyword id="KW-0312">Gluconeogenesis</keyword>
<keyword id="KW-0324">Glycolysis</keyword>
<keyword id="KW-0413">Isomerase</keyword>
<keyword id="KW-1185">Reference proteome</keyword>
<name>TPIS_RHOBA</name>
<proteinExistence type="inferred from homology"/>
<reference key="1">
    <citation type="journal article" date="2003" name="Proc. Natl. Acad. Sci. U.S.A.">
        <title>Complete genome sequence of the marine planctomycete Pirellula sp. strain 1.</title>
        <authorList>
            <person name="Gloeckner F.O."/>
            <person name="Kube M."/>
            <person name="Bauer M."/>
            <person name="Teeling H."/>
            <person name="Lombardot T."/>
            <person name="Ludwig W."/>
            <person name="Gade D."/>
            <person name="Beck A."/>
            <person name="Borzym K."/>
            <person name="Heitmann K."/>
            <person name="Rabus R."/>
            <person name="Schlesner H."/>
            <person name="Amann R."/>
            <person name="Reinhardt R."/>
        </authorList>
    </citation>
    <scope>NUCLEOTIDE SEQUENCE [LARGE SCALE GENOMIC DNA]</scope>
    <source>
        <strain>DSM 10527 / NCIMB 13988 / SH1</strain>
    </source>
</reference>
<gene>
    <name evidence="1" type="primary">tpiA</name>
    <name type="ordered locus">RB7095</name>
</gene>
<protein>
    <recommendedName>
        <fullName evidence="1">Triosephosphate isomerase</fullName>
        <shortName evidence="1">TIM</shortName>
        <shortName evidence="1">TPI</shortName>
        <ecNumber evidence="1">5.3.1.1</ecNumber>
    </recommendedName>
    <alternativeName>
        <fullName evidence="1">Triose-phosphate isomerase</fullName>
    </alternativeName>
</protein>
<accession>Q7UP89</accession>
<feature type="chain" id="PRO_0000090278" description="Triosephosphate isomerase">
    <location>
        <begin position="1"/>
        <end position="254"/>
    </location>
</feature>
<feature type="active site" description="Electrophile" evidence="1">
    <location>
        <position position="96"/>
    </location>
</feature>
<feature type="active site" description="Proton acceptor" evidence="1">
    <location>
        <position position="168"/>
    </location>
</feature>
<feature type="binding site" evidence="1">
    <location>
        <begin position="10"/>
        <end position="12"/>
    </location>
    <ligand>
        <name>substrate</name>
    </ligand>
</feature>
<feature type="binding site" evidence="1">
    <location>
        <position position="174"/>
    </location>
    <ligand>
        <name>substrate</name>
    </ligand>
</feature>
<feature type="binding site" evidence="1">
    <location>
        <position position="214"/>
    </location>
    <ligand>
        <name>substrate</name>
    </ligand>
</feature>
<feature type="binding site" evidence="1">
    <location>
        <begin position="235"/>
        <end position="236"/>
    </location>
    <ligand>
        <name>substrate</name>
    </ligand>
</feature>